<gene>
    <name evidence="1" type="primary">rpoZ</name>
    <name type="ordered locus">Ddes_2161</name>
</gene>
<proteinExistence type="inferred from homology"/>
<organism>
    <name type="scientific">Desulfovibrio desulfuricans (strain ATCC 27774 / DSM 6949 / MB)</name>
    <dbReference type="NCBI Taxonomy" id="525146"/>
    <lineage>
        <taxon>Bacteria</taxon>
        <taxon>Pseudomonadati</taxon>
        <taxon>Thermodesulfobacteriota</taxon>
        <taxon>Desulfovibrionia</taxon>
        <taxon>Desulfovibrionales</taxon>
        <taxon>Desulfovibrionaceae</taxon>
        <taxon>Desulfovibrio</taxon>
    </lineage>
</organism>
<protein>
    <recommendedName>
        <fullName evidence="1">DNA-directed RNA polymerase subunit omega</fullName>
        <shortName evidence="1">RNAP omega subunit</shortName>
        <ecNumber evidence="1">2.7.7.6</ecNumber>
    </recommendedName>
    <alternativeName>
        <fullName evidence="1">RNA polymerase omega subunit</fullName>
    </alternativeName>
    <alternativeName>
        <fullName evidence="1">Transcriptase subunit omega</fullName>
    </alternativeName>
</protein>
<sequence length="78" mass="8799">MARITVEDCQERVDNRFLLVQMAIKRVHQYREGYEPLVESRNKEVVTALREIAAGKVLPDDDALYTPPAEQAAAVNEG</sequence>
<name>RPOZ_DESDA</name>
<dbReference type="EC" id="2.7.7.6" evidence="1"/>
<dbReference type="EMBL" id="CP001358">
    <property type="protein sequence ID" value="ACL50057.1"/>
    <property type="molecule type" value="Genomic_DNA"/>
</dbReference>
<dbReference type="SMR" id="B8J412"/>
<dbReference type="STRING" id="525146.Ddes_2161"/>
<dbReference type="KEGG" id="dds:Ddes_2161"/>
<dbReference type="eggNOG" id="COG1758">
    <property type="taxonomic scope" value="Bacteria"/>
</dbReference>
<dbReference type="HOGENOM" id="CLU_125406_5_1_7"/>
<dbReference type="GO" id="GO:0000428">
    <property type="term" value="C:DNA-directed RNA polymerase complex"/>
    <property type="evidence" value="ECO:0007669"/>
    <property type="project" value="UniProtKB-KW"/>
</dbReference>
<dbReference type="GO" id="GO:0003677">
    <property type="term" value="F:DNA binding"/>
    <property type="evidence" value="ECO:0007669"/>
    <property type="project" value="UniProtKB-UniRule"/>
</dbReference>
<dbReference type="GO" id="GO:0003899">
    <property type="term" value="F:DNA-directed RNA polymerase activity"/>
    <property type="evidence" value="ECO:0007669"/>
    <property type="project" value="UniProtKB-UniRule"/>
</dbReference>
<dbReference type="GO" id="GO:0006351">
    <property type="term" value="P:DNA-templated transcription"/>
    <property type="evidence" value="ECO:0007669"/>
    <property type="project" value="UniProtKB-UniRule"/>
</dbReference>
<dbReference type="Gene3D" id="3.90.940.10">
    <property type="match status" value="1"/>
</dbReference>
<dbReference type="HAMAP" id="MF_00366">
    <property type="entry name" value="RNApol_bact_RpoZ"/>
    <property type="match status" value="1"/>
</dbReference>
<dbReference type="InterPro" id="IPR003716">
    <property type="entry name" value="DNA-dir_RNA_pol_omega"/>
</dbReference>
<dbReference type="InterPro" id="IPR006110">
    <property type="entry name" value="Pol_omega/Rpo6/RPB6"/>
</dbReference>
<dbReference type="InterPro" id="IPR036161">
    <property type="entry name" value="RPB6/omega-like_sf"/>
</dbReference>
<dbReference type="NCBIfam" id="TIGR00690">
    <property type="entry name" value="rpoZ"/>
    <property type="match status" value="1"/>
</dbReference>
<dbReference type="PANTHER" id="PTHR34476">
    <property type="entry name" value="DNA-DIRECTED RNA POLYMERASE SUBUNIT OMEGA"/>
    <property type="match status" value="1"/>
</dbReference>
<dbReference type="PANTHER" id="PTHR34476:SF1">
    <property type="entry name" value="DNA-DIRECTED RNA POLYMERASE SUBUNIT OMEGA"/>
    <property type="match status" value="1"/>
</dbReference>
<dbReference type="Pfam" id="PF01192">
    <property type="entry name" value="RNA_pol_Rpb6"/>
    <property type="match status" value="1"/>
</dbReference>
<dbReference type="SMART" id="SM01409">
    <property type="entry name" value="RNA_pol_Rpb6"/>
    <property type="match status" value="1"/>
</dbReference>
<dbReference type="SUPFAM" id="SSF63562">
    <property type="entry name" value="RPB6/omega subunit-like"/>
    <property type="match status" value="1"/>
</dbReference>
<keyword id="KW-0240">DNA-directed RNA polymerase</keyword>
<keyword id="KW-0548">Nucleotidyltransferase</keyword>
<keyword id="KW-0804">Transcription</keyword>
<keyword id="KW-0808">Transferase</keyword>
<accession>B8J412</accession>
<evidence type="ECO:0000255" key="1">
    <source>
        <dbReference type="HAMAP-Rule" id="MF_00366"/>
    </source>
</evidence>
<reference key="1">
    <citation type="submission" date="2009-01" db="EMBL/GenBank/DDBJ databases">
        <title>Complete sequence of Desulfovibrio desulfuricans subsp. desulfuricans str. ATCC 27774.</title>
        <authorList>
            <consortium name="US DOE Joint Genome Institute"/>
            <person name="Lucas S."/>
            <person name="Copeland A."/>
            <person name="Lapidus A."/>
            <person name="Glavina del Rio T."/>
            <person name="Tice H."/>
            <person name="Bruce D."/>
            <person name="Goodwin L."/>
            <person name="Pitluck S."/>
            <person name="Sims D."/>
            <person name="Lu M."/>
            <person name="Kiss H."/>
            <person name="Meineke L."/>
            <person name="Brettin T."/>
            <person name="Detter J.C."/>
            <person name="Han C."/>
            <person name="Larimer F."/>
            <person name="Land M."/>
            <person name="Hauser L."/>
            <person name="Kyrpides N."/>
            <person name="Ovchinnikova G."/>
            <person name="Hazen T.C."/>
        </authorList>
    </citation>
    <scope>NUCLEOTIDE SEQUENCE [LARGE SCALE GENOMIC DNA]</scope>
    <source>
        <strain>ATCC 27774 / DSM 6949 / MB</strain>
    </source>
</reference>
<feature type="chain" id="PRO_1000194791" description="DNA-directed RNA polymerase subunit omega">
    <location>
        <begin position="1"/>
        <end position="78"/>
    </location>
</feature>
<comment type="function">
    <text evidence="1">Promotes RNA polymerase assembly. Latches the N- and C-terminal regions of the beta' subunit thereby facilitating its interaction with the beta and alpha subunits.</text>
</comment>
<comment type="catalytic activity">
    <reaction evidence="1">
        <text>RNA(n) + a ribonucleoside 5'-triphosphate = RNA(n+1) + diphosphate</text>
        <dbReference type="Rhea" id="RHEA:21248"/>
        <dbReference type="Rhea" id="RHEA-COMP:14527"/>
        <dbReference type="Rhea" id="RHEA-COMP:17342"/>
        <dbReference type="ChEBI" id="CHEBI:33019"/>
        <dbReference type="ChEBI" id="CHEBI:61557"/>
        <dbReference type="ChEBI" id="CHEBI:140395"/>
        <dbReference type="EC" id="2.7.7.6"/>
    </reaction>
</comment>
<comment type="subunit">
    <text evidence="1">The RNAP catalytic core consists of 2 alpha, 1 beta, 1 beta' and 1 omega subunit. When a sigma factor is associated with the core the holoenzyme is formed, which can initiate transcription.</text>
</comment>
<comment type="similarity">
    <text evidence="1">Belongs to the RNA polymerase subunit omega family.</text>
</comment>